<dbReference type="EC" id="2.4.1.-" evidence="4"/>
<dbReference type="EMBL" id="KY906052">
    <property type="protein sequence ID" value="ARJ31416.1"/>
    <property type="molecule type" value="mRNA"/>
</dbReference>
<dbReference type="EMBL" id="AC003113">
    <property type="protein sequence ID" value="AAF70834.1"/>
    <property type="status" value="ALT_SEQ"/>
    <property type="molecule type" value="Genomic_DNA"/>
</dbReference>
<dbReference type="EMBL" id="CP002684">
    <property type="protein sequence ID" value="AEE33954.1"/>
    <property type="molecule type" value="Genomic_DNA"/>
</dbReference>
<dbReference type="EMBL" id="AK176802">
    <property type="protein sequence ID" value="BAD44565.1"/>
    <property type="molecule type" value="mRNA"/>
</dbReference>
<dbReference type="PIR" id="T01442">
    <property type="entry name" value="T01442"/>
</dbReference>
<dbReference type="RefSeq" id="NP_176423.3">
    <property type="nucleotide sequence ID" value="NM_104913.4"/>
</dbReference>
<dbReference type="FunCoup" id="F4HYR4">
    <property type="interactions" value="1633"/>
</dbReference>
<dbReference type="IntAct" id="F4HYR4">
    <property type="interactions" value="5"/>
</dbReference>
<dbReference type="STRING" id="3702.F4HYR4"/>
<dbReference type="GlyCosmos" id="F4HYR4">
    <property type="glycosylation" value="6 sites, No reported glycans"/>
</dbReference>
<dbReference type="GlyGen" id="F4HYR4">
    <property type="glycosylation" value="6 sites"/>
</dbReference>
<dbReference type="iPTMnet" id="F4HYR4"/>
<dbReference type="PaxDb" id="3702-AT1G62330.1"/>
<dbReference type="ProteomicsDB" id="250892"/>
<dbReference type="EnsemblPlants" id="AT1G62330.1">
    <property type="protein sequence ID" value="AT1G62330.1"/>
    <property type="gene ID" value="AT1G62330"/>
</dbReference>
<dbReference type="GeneID" id="842531"/>
<dbReference type="Gramene" id="AT1G62330.1">
    <property type="protein sequence ID" value="AT1G62330.1"/>
    <property type="gene ID" value="AT1G62330"/>
</dbReference>
<dbReference type="KEGG" id="ath:AT1G62330"/>
<dbReference type="Araport" id="AT1G62330"/>
<dbReference type="TAIR" id="AT1G62330"/>
<dbReference type="eggNOG" id="ENOG502QU78">
    <property type="taxonomic scope" value="Eukaryota"/>
</dbReference>
<dbReference type="HOGENOM" id="CLU_018420_8_0_1"/>
<dbReference type="InParanoid" id="F4HYR4"/>
<dbReference type="OMA" id="RHLVGPF"/>
<dbReference type="PRO" id="PR:F4HYR4"/>
<dbReference type="Proteomes" id="UP000006548">
    <property type="component" value="Chromosome 1"/>
</dbReference>
<dbReference type="ExpressionAtlas" id="F4HYR4">
    <property type="expression patterns" value="baseline and differential"/>
</dbReference>
<dbReference type="GO" id="GO:0005768">
    <property type="term" value="C:endosome"/>
    <property type="evidence" value="ECO:0007005"/>
    <property type="project" value="TAIR"/>
</dbReference>
<dbReference type="GO" id="GO:0005794">
    <property type="term" value="C:Golgi apparatus"/>
    <property type="evidence" value="ECO:0007005"/>
    <property type="project" value="TAIR"/>
</dbReference>
<dbReference type="GO" id="GO:0000137">
    <property type="term" value="C:Golgi cis cisterna"/>
    <property type="evidence" value="ECO:0007005"/>
    <property type="project" value="TAIR"/>
</dbReference>
<dbReference type="GO" id="GO:0016020">
    <property type="term" value="C:membrane"/>
    <property type="evidence" value="ECO:0007669"/>
    <property type="project" value="UniProtKB-SubCell"/>
</dbReference>
<dbReference type="GO" id="GO:0005802">
    <property type="term" value="C:trans-Golgi network"/>
    <property type="evidence" value="ECO:0007005"/>
    <property type="project" value="TAIR"/>
</dbReference>
<dbReference type="GO" id="GO:0016757">
    <property type="term" value="F:glycosyltransferase activity"/>
    <property type="evidence" value="ECO:0007669"/>
    <property type="project" value="UniProtKB-KW"/>
</dbReference>
<dbReference type="GO" id="GO:0006004">
    <property type="term" value="P:fucose metabolic process"/>
    <property type="evidence" value="ECO:0007669"/>
    <property type="project" value="UniProtKB-KW"/>
</dbReference>
<dbReference type="CDD" id="cd11299">
    <property type="entry name" value="O-FucT_plant"/>
    <property type="match status" value="1"/>
</dbReference>
<dbReference type="InterPro" id="IPR024709">
    <property type="entry name" value="FucosylTrfase_pln"/>
</dbReference>
<dbReference type="InterPro" id="IPR019378">
    <property type="entry name" value="GDP-Fuc_O-FucTrfase"/>
</dbReference>
<dbReference type="InterPro" id="IPR052272">
    <property type="entry name" value="GT106_glycosyltransferase"/>
</dbReference>
<dbReference type="PANTHER" id="PTHR31933:SF10">
    <property type="entry name" value="O-FUCOSYLTRANSFERASE 15"/>
    <property type="match status" value="1"/>
</dbReference>
<dbReference type="PANTHER" id="PTHR31933">
    <property type="entry name" value="O-FUCOSYLTRANSFERASE 2-RELATED"/>
    <property type="match status" value="1"/>
</dbReference>
<dbReference type="Pfam" id="PF10250">
    <property type="entry name" value="O-FucT"/>
    <property type="match status" value="1"/>
</dbReference>
<dbReference type="PIRSF" id="PIRSF009360">
    <property type="entry name" value="UCP009360"/>
    <property type="match status" value="1"/>
</dbReference>
<organism>
    <name type="scientific">Arabidopsis thaliana</name>
    <name type="common">Mouse-ear cress</name>
    <dbReference type="NCBI Taxonomy" id="3702"/>
    <lineage>
        <taxon>Eukaryota</taxon>
        <taxon>Viridiplantae</taxon>
        <taxon>Streptophyta</taxon>
        <taxon>Embryophyta</taxon>
        <taxon>Tracheophyta</taxon>
        <taxon>Spermatophyta</taxon>
        <taxon>Magnoliopsida</taxon>
        <taxon>eudicotyledons</taxon>
        <taxon>Gunneridae</taxon>
        <taxon>Pentapetalae</taxon>
        <taxon>rosids</taxon>
        <taxon>malvids</taxon>
        <taxon>Brassicales</taxon>
        <taxon>Brassicaceae</taxon>
        <taxon>Camelineae</taxon>
        <taxon>Arabidopsis</taxon>
    </lineage>
</organism>
<reference key="1">
    <citation type="submission" date="2017-04" db="EMBL/GenBank/DDBJ databases">
        <title>Arabidopsis glycosyltransferases: an update.</title>
        <authorList>
            <person name="Zeng W."/>
            <person name="Gluza P."/>
            <person name="Heazlewood J."/>
        </authorList>
    </citation>
    <scope>NUCLEOTIDE SEQUENCE [MRNA]</scope>
    <source>
        <strain>cv. Columbia</strain>
    </source>
</reference>
<reference key="2">
    <citation type="journal article" date="2000" name="Nature">
        <title>Sequence and analysis of chromosome 1 of the plant Arabidopsis thaliana.</title>
        <authorList>
            <person name="Theologis A."/>
            <person name="Ecker J.R."/>
            <person name="Palm C.J."/>
            <person name="Federspiel N.A."/>
            <person name="Kaul S."/>
            <person name="White O."/>
            <person name="Alonso J."/>
            <person name="Altafi H."/>
            <person name="Araujo R."/>
            <person name="Bowman C.L."/>
            <person name="Brooks S.Y."/>
            <person name="Buehler E."/>
            <person name="Chan A."/>
            <person name="Chao Q."/>
            <person name="Chen H."/>
            <person name="Cheuk R.F."/>
            <person name="Chin C.W."/>
            <person name="Chung M.K."/>
            <person name="Conn L."/>
            <person name="Conway A.B."/>
            <person name="Conway A.R."/>
            <person name="Creasy T.H."/>
            <person name="Dewar K."/>
            <person name="Dunn P."/>
            <person name="Etgu P."/>
            <person name="Feldblyum T.V."/>
            <person name="Feng J.-D."/>
            <person name="Fong B."/>
            <person name="Fujii C.Y."/>
            <person name="Gill J.E."/>
            <person name="Goldsmith A.D."/>
            <person name="Haas B."/>
            <person name="Hansen N.F."/>
            <person name="Hughes B."/>
            <person name="Huizar L."/>
            <person name="Hunter J.L."/>
            <person name="Jenkins J."/>
            <person name="Johnson-Hopson C."/>
            <person name="Khan S."/>
            <person name="Khaykin E."/>
            <person name="Kim C.J."/>
            <person name="Koo H.L."/>
            <person name="Kremenetskaia I."/>
            <person name="Kurtz D.B."/>
            <person name="Kwan A."/>
            <person name="Lam B."/>
            <person name="Langin-Hooper S."/>
            <person name="Lee A."/>
            <person name="Lee J.M."/>
            <person name="Lenz C.A."/>
            <person name="Li J.H."/>
            <person name="Li Y.-P."/>
            <person name="Lin X."/>
            <person name="Liu S.X."/>
            <person name="Liu Z.A."/>
            <person name="Luros J.S."/>
            <person name="Maiti R."/>
            <person name="Marziali A."/>
            <person name="Militscher J."/>
            <person name="Miranda M."/>
            <person name="Nguyen M."/>
            <person name="Nierman W.C."/>
            <person name="Osborne B.I."/>
            <person name="Pai G."/>
            <person name="Peterson J."/>
            <person name="Pham P.K."/>
            <person name="Rizzo M."/>
            <person name="Rooney T."/>
            <person name="Rowley D."/>
            <person name="Sakano H."/>
            <person name="Salzberg S.L."/>
            <person name="Schwartz J.R."/>
            <person name="Shinn P."/>
            <person name="Southwick A.M."/>
            <person name="Sun H."/>
            <person name="Tallon L.J."/>
            <person name="Tambunga G."/>
            <person name="Toriumi M.J."/>
            <person name="Town C.D."/>
            <person name="Utterback T."/>
            <person name="Van Aken S."/>
            <person name="Vaysberg M."/>
            <person name="Vysotskaia V.S."/>
            <person name="Walker M."/>
            <person name="Wu D."/>
            <person name="Yu G."/>
            <person name="Fraser C.M."/>
            <person name="Venter J.C."/>
            <person name="Davis R.W."/>
        </authorList>
    </citation>
    <scope>NUCLEOTIDE SEQUENCE [LARGE SCALE GENOMIC DNA]</scope>
    <source>
        <strain>cv. Columbia</strain>
    </source>
</reference>
<reference key="3">
    <citation type="journal article" date="2017" name="Plant J.">
        <title>Araport11: a complete reannotation of the Arabidopsis thaliana reference genome.</title>
        <authorList>
            <person name="Cheng C.Y."/>
            <person name="Krishnakumar V."/>
            <person name="Chan A.P."/>
            <person name="Thibaud-Nissen F."/>
            <person name="Schobel S."/>
            <person name="Town C.D."/>
        </authorList>
    </citation>
    <scope>GENOME REANNOTATION</scope>
    <source>
        <strain>cv. Columbia</strain>
    </source>
</reference>
<reference key="4">
    <citation type="submission" date="2004-09" db="EMBL/GenBank/DDBJ databases">
        <title>Large-scale analysis of RIKEN Arabidopsis full-length (RAFL) cDNAs.</title>
        <authorList>
            <person name="Totoki Y."/>
            <person name="Seki M."/>
            <person name="Ishida J."/>
            <person name="Nakajima M."/>
            <person name="Enju A."/>
            <person name="Kamiya A."/>
            <person name="Narusaka M."/>
            <person name="Shin-i T."/>
            <person name="Nakagawa M."/>
            <person name="Sakamoto N."/>
            <person name="Oishi K."/>
            <person name="Kohara Y."/>
            <person name="Kobayashi M."/>
            <person name="Toyoda A."/>
            <person name="Sakaki Y."/>
            <person name="Sakurai T."/>
            <person name="Iida K."/>
            <person name="Akiyama K."/>
            <person name="Satou M."/>
            <person name="Toyoda T."/>
            <person name="Konagaya A."/>
            <person name="Carninci P."/>
            <person name="Kawai J."/>
            <person name="Hayashizaki Y."/>
            <person name="Shinozaki K."/>
        </authorList>
    </citation>
    <scope>NUCLEOTIDE SEQUENCE [LARGE SCALE MRNA]</scope>
    <source>
        <strain>cv. Columbia</strain>
    </source>
</reference>
<reference key="5">
    <citation type="journal article" date="2012" name="Front. Plant Sci.">
        <title>Plant glycosyltransferases beyond CAZy: a perspective on DUF families.</title>
        <authorList>
            <person name="Hansen S.F."/>
            <person name="Harholt J."/>
            <person name="Oikawa A."/>
            <person name="Scheller H.V."/>
        </authorList>
    </citation>
    <scope>GENE FAMILY</scope>
    <scope>REVIEW</scope>
</reference>
<reference key="6">
    <citation type="journal article" date="2012" name="PLoS ONE">
        <title>The FRIABLE1 gene product affects cell adhesion in Arabidopsis.</title>
        <authorList>
            <person name="Neumetzler L."/>
            <person name="Humphrey T."/>
            <person name="Lumba S."/>
            <person name="Snyder S."/>
            <person name="Yeats T.H."/>
            <person name="Usadel B."/>
            <person name="Vasilevski A."/>
            <person name="Patel J."/>
            <person name="Rose J.K."/>
            <person name="Persson S."/>
            <person name="Bonetta D."/>
        </authorList>
    </citation>
    <scope>GENE FAMILY</scope>
</reference>
<reference key="7">
    <citation type="journal article" date="2012" name="PLoS ONE">
        <title>Identification of putative rhamnogalacturonan-II specific glycosyltransferases in Arabidopsis using a combination of bioinformatics approaches.</title>
        <authorList>
            <person name="Voxeur A."/>
            <person name="Andre A."/>
            <person name="Breton C."/>
            <person name="Lerouge P."/>
        </authorList>
    </citation>
    <scope>GENE FAMILY</scope>
</reference>
<reference key="8">
    <citation type="journal article" date="2013" name="Plant J.">
        <title>Identification of an additional protein involved in mannan biosynthesis.</title>
        <authorList>
            <person name="Wang Y."/>
            <person name="Mortimer J.C."/>
            <person name="Davis J."/>
            <person name="Dupree P."/>
            <person name="Keegstra K."/>
        </authorList>
    </citation>
    <scope>GENE FAMILY</scope>
</reference>
<reference key="9">
    <citation type="journal article" date="2014" name="Plant J.">
        <title>The plant glycosyltransferase clone collection for functional genomics.</title>
        <authorList>
            <person name="Lao J."/>
            <person name="Oikawa A."/>
            <person name="Bromley J.R."/>
            <person name="McInerney P."/>
            <person name="Suttangkakul A."/>
            <person name="Smith-Moritz A.M."/>
            <person name="Plahar H."/>
            <person name="Chiu T.-Y."/>
            <person name="Gonzalez Fernandez-Nino S.M.G."/>
            <person name="Ebert B."/>
            <person name="Yang F."/>
            <person name="Christiansen K.M."/>
            <person name="Hansen S.F."/>
            <person name="Stonebloom S."/>
            <person name="Adams P.D."/>
            <person name="Ronald P.C."/>
            <person name="Hillson N.J."/>
            <person name="Hadi M.Z."/>
            <person name="Vega-Sanchez M.E."/>
            <person name="Loque D."/>
            <person name="Scheller H.V."/>
            <person name="Heazlewood J.L."/>
        </authorList>
    </citation>
    <scope>WEB RESOURCE</scope>
</reference>
<gene>
    <name evidence="4" type="primary">OFUT15</name>
    <name evidence="5" type="ordered locus">At1g62330</name>
    <name evidence="6" type="ORF">F24O1.5</name>
</gene>
<evidence type="ECO:0000250" key="1">
    <source>
        <dbReference type="UniProtKB" id="Q9H488"/>
    </source>
</evidence>
<evidence type="ECO:0000255" key="2"/>
<evidence type="ECO:0000255" key="3">
    <source>
        <dbReference type="PROSITE-ProRule" id="PRU00498"/>
    </source>
</evidence>
<evidence type="ECO:0000305" key="4"/>
<evidence type="ECO:0000312" key="5">
    <source>
        <dbReference type="Araport" id="AT1G62330"/>
    </source>
</evidence>
<evidence type="ECO:0000312" key="6">
    <source>
        <dbReference type="EMBL" id="AAF70834.1"/>
    </source>
</evidence>
<evidence type="ECO:0000312" key="7">
    <source>
        <dbReference type="EMBL" id="ARJ31416.1"/>
    </source>
</evidence>
<name>OFT15_ARATH</name>
<sequence length="652" mass="73296">MSSERPDEEKPETRDVLRVQDLIHGGGGASPVQSPTRLGPTRFSEVAGDKILNTGSNCIGSVLSWINGDPNRNLKNPVKRAKRKRIRTAKTAAFVIVLVGFFIFVNWFMLSQLHEGRAWLRRGFSKKTNLKPKLNPDPNSSVKRVSVKVSANVQHKEKKKMGKPKKTYNGTYGRLLAYAAHALAEGQNKLEPKELWREPKDQALAWKPCADQRSWKPSDGKNGYIMVTANGGINQQRVAVCNIVVVARMLNATLVIPKFMFSDVWTDASQFGDIYQVEHFIKYLSPDIRIVKKLPKELQSLDLEAIGSVVTDIDVMKEAKPGFYMKHILPLLLKNRVVHFLGFGNRLAFDPIPFELQRLRCRCNFHALNFVPKIQETGAILVRRLRDSGSHLAPVDPYLVGPKFASFILDKKAGPLHKASKYLAVHLRFEIDMVAHSLCYFGGGDAEKAELDAYREKHFPTLANLTKTQKMPSPDDLRTEGLCPLSPEEAVLMLAGLGFSRKTRVFVAGANIYGGNKRLAALTSLYPNLVTKENVLSQTELEPFKNFSSQLAVLDFIACAASDAFAMTDSGSQLSSLVSGYRIYYGAGKMPTIRPNKRRFSDILLKNNTIEWKVFEQRVRKTVRQTKHVLVRPTGRSVYRYPRCKECMCNED</sequence>
<feature type="chain" id="PRO_0000442077" description="O-fucosyltransferase 15">
    <location>
        <begin position="1"/>
        <end position="652"/>
    </location>
</feature>
<feature type="transmembrane region" description="Helical; Signal-anchor for type II membrane protein" evidence="4">
    <location>
        <begin position="91"/>
        <end position="111"/>
    </location>
</feature>
<feature type="binding site" evidence="1">
    <location>
        <begin position="426"/>
        <end position="428"/>
    </location>
    <ligand>
        <name>substrate</name>
    </ligand>
</feature>
<feature type="glycosylation site" description="N-linked (GlcNAc...) asparagine" evidence="3">
    <location>
        <position position="139"/>
    </location>
</feature>
<feature type="glycosylation site" description="N-linked (GlcNAc...) asparagine" evidence="3">
    <location>
        <position position="169"/>
    </location>
</feature>
<feature type="glycosylation site" description="N-linked (GlcNAc...) asparagine" evidence="3">
    <location>
        <position position="251"/>
    </location>
</feature>
<feature type="glycosylation site" description="N-linked (GlcNAc...) asparagine" evidence="3">
    <location>
        <position position="464"/>
    </location>
</feature>
<feature type="glycosylation site" description="N-linked (GlcNAc...) asparagine" evidence="3">
    <location>
        <position position="546"/>
    </location>
</feature>
<feature type="glycosylation site" description="N-linked (GlcNAc...) asparagine" evidence="3">
    <location>
        <position position="607"/>
    </location>
</feature>
<feature type="sequence conflict" description="In Ref. 4; BAD44565." evidence="4" ref="4">
    <original>V</original>
    <variation>I</variation>
    <location>
        <position position="105"/>
    </location>
</feature>
<proteinExistence type="evidence at transcript level"/>
<accession>F4HYR4</accession>
<accession>O48796</accession>
<accession>Q67XL6</accession>
<protein>
    <recommendedName>
        <fullName evidence="4">O-fucosyltransferase 15</fullName>
        <shortName evidence="4">O-FucT-15</shortName>
        <ecNumber evidence="4">2.4.1.-</ecNumber>
    </recommendedName>
    <alternativeName>
        <fullName evidence="7">O-fucosyltransferase family protein</fullName>
    </alternativeName>
</protein>
<comment type="pathway">
    <text evidence="4">Glycan metabolism.</text>
</comment>
<comment type="subcellular location">
    <subcellularLocation>
        <location evidence="2">Membrane</location>
        <topology evidence="4">Single-pass type II membrane protein</topology>
    </subcellularLocation>
</comment>
<comment type="similarity">
    <text evidence="4">Belongs to the glycosyltransferase GT106 family.</text>
</comment>
<comment type="sequence caution" evidence="4">
    <conflict type="erroneous gene model prediction">
        <sequence resource="EMBL-CDS" id="AAF70834"/>
    </conflict>
</comment>
<keyword id="KW-0119">Carbohydrate metabolism</keyword>
<keyword id="KW-0294">Fucose metabolism</keyword>
<keyword id="KW-0325">Glycoprotein</keyword>
<keyword id="KW-0328">Glycosyltransferase</keyword>
<keyword id="KW-0472">Membrane</keyword>
<keyword id="KW-1185">Reference proteome</keyword>
<keyword id="KW-0735">Signal-anchor</keyword>
<keyword id="KW-0808">Transferase</keyword>
<keyword id="KW-0812">Transmembrane</keyword>
<keyword id="KW-1133">Transmembrane helix</keyword>